<dbReference type="EC" id="2.7.11.21"/>
<dbReference type="EMBL" id="CH477577">
    <property type="protein sequence ID" value="EAT38772.1"/>
    <property type="molecule type" value="Genomic_DNA"/>
</dbReference>
<dbReference type="RefSeq" id="XP_001659987.1">
    <property type="nucleotide sequence ID" value="XM_001659937.1"/>
</dbReference>
<dbReference type="SMR" id="Q16W24"/>
<dbReference type="FunCoup" id="Q16W24">
    <property type="interactions" value="320"/>
</dbReference>
<dbReference type="STRING" id="7159.Q16W24"/>
<dbReference type="VEuPathDB" id="VectorBase:AAEL009360"/>
<dbReference type="VEuPathDB" id="VectorBase:AAEL013390"/>
<dbReference type="eggNOG" id="KOG0575">
    <property type="taxonomic scope" value="Eukaryota"/>
</dbReference>
<dbReference type="InParanoid" id="Q16W24"/>
<dbReference type="OMA" id="LPSKHWK"/>
<dbReference type="PhylomeDB" id="Q16W24"/>
<dbReference type="Proteomes" id="UP000008820">
    <property type="component" value="Unassembled WGS sequence"/>
</dbReference>
<dbReference type="Proteomes" id="UP000682892">
    <property type="component" value="Unassembled WGS sequence"/>
</dbReference>
<dbReference type="GO" id="GO:0005814">
    <property type="term" value="C:centriole"/>
    <property type="evidence" value="ECO:0007669"/>
    <property type="project" value="UniProtKB-SubCell"/>
</dbReference>
<dbReference type="GO" id="GO:0005737">
    <property type="term" value="C:cytoplasm"/>
    <property type="evidence" value="ECO:0007669"/>
    <property type="project" value="UniProtKB-KW"/>
</dbReference>
<dbReference type="GO" id="GO:0005634">
    <property type="term" value="C:nucleus"/>
    <property type="evidence" value="ECO:0007669"/>
    <property type="project" value="TreeGrafter"/>
</dbReference>
<dbReference type="GO" id="GO:0005524">
    <property type="term" value="F:ATP binding"/>
    <property type="evidence" value="ECO:0007669"/>
    <property type="project" value="UniProtKB-KW"/>
</dbReference>
<dbReference type="GO" id="GO:0106310">
    <property type="term" value="F:protein serine kinase activity"/>
    <property type="evidence" value="ECO:0007669"/>
    <property type="project" value="RHEA"/>
</dbReference>
<dbReference type="GO" id="GO:0004674">
    <property type="term" value="F:protein serine/threonine kinase activity"/>
    <property type="evidence" value="ECO:0007669"/>
    <property type="project" value="UniProtKB-KW"/>
</dbReference>
<dbReference type="CDD" id="cd13114">
    <property type="entry name" value="POLO_box_Plk4_1"/>
    <property type="match status" value="1"/>
</dbReference>
<dbReference type="CDD" id="cd13115">
    <property type="entry name" value="POLO_box_Plk4_2"/>
    <property type="match status" value="1"/>
</dbReference>
<dbReference type="CDD" id="cd13116">
    <property type="entry name" value="POLO_box_Plk4_3"/>
    <property type="match status" value="1"/>
</dbReference>
<dbReference type="FunFam" id="3.30.200.20:FF:000042">
    <property type="entry name" value="Aurora kinase A"/>
    <property type="match status" value="1"/>
</dbReference>
<dbReference type="FunFam" id="1.10.510.10:FF:000576">
    <property type="entry name" value="Serine/threonine-protein kinase PLK4"/>
    <property type="match status" value="1"/>
</dbReference>
<dbReference type="FunFam" id="3.30.1120.120:FF:000001">
    <property type="entry name" value="serine/threonine-protein kinase PLK4 isoform X2"/>
    <property type="match status" value="1"/>
</dbReference>
<dbReference type="Gene3D" id="3.30.1120.120">
    <property type="match status" value="1"/>
</dbReference>
<dbReference type="Gene3D" id="3.30.1120.130">
    <property type="match status" value="1"/>
</dbReference>
<dbReference type="Gene3D" id="3.30.1120.30">
    <property type="entry name" value="POLO box domain"/>
    <property type="match status" value="1"/>
</dbReference>
<dbReference type="Gene3D" id="1.10.510.10">
    <property type="entry name" value="Transferase(Phosphotransferase) domain 1"/>
    <property type="match status" value="1"/>
</dbReference>
<dbReference type="InterPro" id="IPR011009">
    <property type="entry name" value="Kinase-like_dom_sf"/>
</dbReference>
<dbReference type="InterPro" id="IPR047108">
    <property type="entry name" value="Plk4-like_POLO_box_2_sf"/>
</dbReference>
<dbReference type="InterPro" id="IPR000959">
    <property type="entry name" value="POLO_box_dom"/>
</dbReference>
<dbReference type="InterPro" id="IPR036947">
    <property type="entry name" value="POLO_box_dom_sf"/>
</dbReference>
<dbReference type="InterPro" id="IPR033699">
    <property type="entry name" value="POLO_box_Plk4_1"/>
</dbReference>
<dbReference type="InterPro" id="IPR033698">
    <property type="entry name" value="POLO_box_Plk4_2"/>
</dbReference>
<dbReference type="InterPro" id="IPR033696">
    <property type="entry name" value="POLO_box_Plk4_C"/>
</dbReference>
<dbReference type="InterPro" id="IPR000719">
    <property type="entry name" value="Prot_kinase_dom"/>
</dbReference>
<dbReference type="InterPro" id="IPR017441">
    <property type="entry name" value="Protein_kinase_ATP_BS"/>
</dbReference>
<dbReference type="InterPro" id="IPR046437">
    <property type="entry name" value="Ser_Thr-PK_POLO_box_1_sf"/>
</dbReference>
<dbReference type="InterPro" id="IPR008266">
    <property type="entry name" value="Tyr_kinase_AS"/>
</dbReference>
<dbReference type="PANTHER" id="PTHR24345">
    <property type="entry name" value="SERINE/THREONINE-PROTEIN KINASE PLK"/>
    <property type="match status" value="1"/>
</dbReference>
<dbReference type="PANTHER" id="PTHR24345:SF91">
    <property type="entry name" value="SERINE_THREONINE-PROTEIN KINASE PLK4"/>
    <property type="match status" value="1"/>
</dbReference>
<dbReference type="Pfam" id="PF00069">
    <property type="entry name" value="Pkinase"/>
    <property type="match status" value="1"/>
</dbReference>
<dbReference type="Pfam" id="PF18190">
    <property type="entry name" value="Plk4_PB1"/>
    <property type="match status" value="1"/>
</dbReference>
<dbReference type="Pfam" id="PF18409">
    <property type="entry name" value="Plk4_PB2"/>
    <property type="match status" value="1"/>
</dbReference>
<dbReference type="SUPFAM" id="SSF82615">
    <property type="entry name" value="Polo-box domain"/>
    <property type="match status" value="1"/>
</dbReference>
<dbReference type="SUPFAM" id="SSF56112">
    <property type="entry name" value="Protein kinase-like (PK-like)"/>
    <property type="match status" value="1"/>
</dbReference>
<dbReference type="PROSITE" id="PS51984">
    <property type="entry name" value="CPB1"/>
    <property type="match status" value="1"/>
</dbReference>
<dbReference type="PROSITE" id="PS51985">
    <property type="entry name" value="CPB2"/>
    <property type="match status" value="1"/>
</dbReference>
<dbReference type="PROSITE" id="PS50078">
    <property type="entry name" value="POLO_BOX"/>
    <property type="match status" value="1"/>
</dbReference>
<dbReference type="PROSITE" id="PS00107">
    <property type="entry name" value="PROTEIN_KINASE_ATP"/>
    <property type="match status" value="1"/>
</dbReference>
<dbReference type="PROSITE" id="PS50011">
    <property type="entry name" value="PROTEIN_KINASE_DOM"/>
    <property type="match status" value="1"/>
</dbReference>
<protein>
    <recommendedName>
        <fullName>Serine/threonine-protein kinase PLK4</fullName>
        <ecNumber>2.7.11.21</ecNumber>
    </recommendedName>
    <alternativeName>
        <fullName>Polo-like kinase 4</fullName>
        <shortName>PLK-4</shortName>
    </alternativeName>
    <alternativeName>
        <fullName>Serine/threonine-protein kinase SAK</fullName>
    </alternativeName>
</protein>
<proteinExistence type="inferred from homology"/>
<evidence type="ECO:0000250" key="1"/>
<evidence type="ECO:0000255" key="2">
    <source>
        <dbReference type="PROSITE-ProRule" id="PRU00154"/>
    </source>
</evidence>
<evidence type="ECO:0000255" key="3">
    <source>
        <dbReference type="PROSITE-ProRule" id="PRU00159"/>
    </source>
</evidence>
<evidence type="ECO:0000255" key="4">
    <source>
        <dbReference type="PROSITE-ProRule" id="PRU01328"/>
    </source>
</evidence>
<evidence type="ECO:0000255" key="5">
    <source>
        <dbReference type="PROSITE-ProRule" id="PRU01329"/>
    </source>
</evidence>
<evidence type="ECO:0000256" key="6">
    <source>
        <dbReference type="SAM" id="MobiDB-lite"/>
    </source>
</evidence>
<keyword id="KW-0067">ATP-binding</keyword>
<keyword id="KW-0963">Cytoplasm</keyword>
<keyword id="KW-0206">Cytoskeleton</keyword>
<keyword id="KW-0418">Kinase</keyword>
<keyword id="KW-0547">Nucleotide-binding</keyword>
<keyword id="KW-1185">Reference proteome</keyword>
<keyword id="KW-0723">Serine/threonine-protein kinase</keyword>
<keyword id="KW-0808">Transferase</keyword>
<keyword id="KW-0832">Ubl conjugation</keyword>
<accession>Q16W24</accession>
<gene>
    <name type="primary">SAK</name>
    <name type="ORF">AAEL009360</name>
</gene>
<feature type="chain" id="PRO_0000385286" description="Serine/threonine-protein kinase PLK4">
    <location>
        <begin position="1"/>
        <end position="769"/>
    </location>
</feature>
<feature type="domain" description="Protein kinase" evidence="3">
    <location>
        <begin position="10"/>
        <end position="263"/>
    </location>
</feature>
<feature type="domain" description="Cryptic POLO box 1 (CPB1)" evidence="4">
    <location>
        <begin position="374"/>
        <end position="491"/>
    </location>
</feature>
<feature type="domain" description="Cryptic POLO box 2 (CPB2)" evidence="5">
    <location>
        <begin position="492"/>
        <end position="595"/>
    </location>
</feature>
<feature type="domain" description="POLO box" evidence="2">
    <location>
        <begin position="662"/>
        <end position="745"/>
    </location>
</feature>
<feature type="region of interest" description="Disordered" evidence="6">
    <location>
        <begin position="280"/>
        <end position="304"/>
    </location>
</feature>
<feature type="region of interest" description="Disordered" evidence="6">
    <location>
        <begin position="337"/>
        <end position="380"/>
    </location>
</feature>
<feature type="region of interest" description="Disordered" evidence="6">
    <location>
        <begin position="592"/>
        <end position="651"/>
    </location>
</feature>
<feature type="compositionally biased region" description="Polar residues" evidence="6">
    <location>
        <begin position="337"/>
        <end position="371"/>
    </location>
</feature>
<feature type="compositionally biased region" description="Polar residues" evidence="6">
    <location>
        <begin position="605"/>
        <end position="648"/>
    </location>
</feature>
<feature type="active site" description="Proton acceptor" evidence="3">
    <location>
        <position position="134"/>
    </location>
</feature>
<feature type="binding site" evidence="3">
    <location>
        <begin position="16"/>
        <end position="24"/>
    </location>
    <ligand>
        <name>ATP</name>
        <dbReference type="ChEBI" id="CHEBI:30616"/>
    </ligand>
</feature>
<feature type="binding site" evidence="3">
    <location>
        <position position="39"/>
    </location>
    <ligand>
        <name>ATP</name>
        <dbReference type="ChEBI" id="CHEBI:30616"/>
    </ligand>
</feature>
<name>PLK4_AEDAE</name>
<reference key="1">
    <citation type="journal article" date="2007" name="Science">
        <title>Genome sequence of Aedes aegypti, a major arbovirus vector.</title>
        <authorList>
            <person name="Nene V."/>
            <person name="Wortman J.R."/>
            <person name="Lawson D."/>
            <person name="Haas B.J."/>
            <person name="Kodira C.D."/>
            <person name="Tu Z.J."/>
            <person name="Loftus B.J."/>
            <person name="Xi Z."/>
            <person name="Megy K."/>
            <person name="Grabherr M."/>
            <person name="Ren Q."/>
            <person name="Zdobnov E.M."/>
            <person name="Lobo N.F."/>
            <person name="Campbell K.S."/>
            <person name="Brown S.E."/>
            <person name="Bonaldo M.F."/>
            <person name="Zhu J."/>
            <person name="Sinkins S.P."/>
            <person name="Hogenkamp D.G."/>
            <person name="Amedeo P."/>
            <person name="Arensburger P."/>
            <person name="Atkinson P.W."/>
            <person name="Bidwell S.L."/>
            <person name="Biedler J."/>
            <person name="Birney E."/>
            <person name="Bruggner R.V."/>
            <person name="Costas J."/>
            <person name="Coy M.R."/>
            <person name="Crabtree J."/>
            <person name="Crawford M."/>
            <person name="DeBruyn B."/>
            <person name="DeCaprio D."/>
            <person name="Eiglmeier K."/>
            <person name="Eisenstadt E."/>
            <person name="El-Dorry H."/>
            <person name="Gelbart W.M."/>
            <person name="Gomes S.L."/>
            <person name="Hammond M."/>
            <person name="Hannick L.I."/>
            <person name="Hogan J.R."/>
            <person name="Holmes M.H."/>
            <person name="Jaffe D."/>
            <person name="Johnston S.J."/>
            <person name="Kennedy R.C."/>
            <person name="Koo H."/>
            <person name="Kravitz S."/>
            <person name="Kriventseva E.V."/>
            <person name="Kulp D."/>
            <person name="Labutti K."/>
            <person name="Lee E."/>
            <person name="Li S."/>
            <person name="Lovin D.D."/>
            <person name="Mao C."/>
            <person name="Mauceli E."/>
            <person name="Menck C.F."/>
            <person name="Miller J.R."/>
            <person name="Montgomery P."/>
            <person name="Mori A."/>
            <person name="Nascimento A.L."/>
            <person name="Naveira H.F."/>
            <person name="Nusbaum C."/>
            <person name="O'Leary S.B."/>
            <person name="Orvis J."/>
            <person name="Pertea M."/>
            <person name="Quesneville H."/>
            <person name="Reidenbach K.R."/>
            <person name="Rogers Y.-H.C."/>
            <person name="Roth C.W."/>
            <person name="Schneider J.R."/>
            <person name="Schatz M."/>
            <person name="Shumway M."/>
            <person name="Stanke M."/>
            <person name="Stinson E.O."/>
            <person name="Tubio J.M.C."/>
            <person name="Vanzee J.P."/>
            <person name="Verjovski-Almeida S."/>
            <person name="Werner D."/>
            <person name="White O.R."/>
            <person name="Wyder S."/>
            <person name="Zeng Q."/>
            <person name="Zhao Q."/>
            <person name="Zhao Y."/>
            <person name="Hill C.A."/>
            <person name="Raikhel A.S."/>
            <person name="Soares M.B."/>
            <person name="Knudson D.L."/>
            <person name="Lee N.H."/>
            <person name="Galagan J."/>
            <person name="Salzberg S.L."/>
            <person name="Paulsen I.T."/>
            <person name="Dimopoulos G."/>
            <person name="Collins F.H."/>
            <person name="Bruce B."/>
            <person name="Fraser-Liggett C.M."/>
            <person name="Severson D.W."/>
        </authorList>
    </citation>
    <scope>NUCLEOTIDE SEQUENCE [LARGE SCALE GENOMIC DNA]</scope>
    <source>
        <strain>LVPib12</strain>
    </source>
</reference>
<organism>
    <name type="scientific">Aedes aegypti</name>
    <name type="common">Yellowfever mosquito</name>
    <name type="synonym">Culex aegypti</name>
    <dbReference type="NCBI Taxonomy" id="7159"/>
    <lineage>
        <taxon>Eukaryota</taxon>
        <taxon>Metazoa</taxon>
        <taxon>Ecdysozoa</taxon>
        <taxon>Arthropoda</taxon>
        <taxon>Hexapoda</taxon>
        <taxon>Insecta</taxon>
        <taxon>Pterygota</taxon>
        <taxon>Neoptera</taxon>
        <taxon>Endopterygota</taxon>
        <taxon>Diptera</taxon>
        <taxon>Nematocera</taxon>
        <taxon>Culicoidea</taxon>
        <taxon>Culicidae</taxon>
        <taxon>Culicinae</taxon>
        <taxon>Aedini</taxon>
        <taxon>Aedes</taxon>
        <taxon>Stegomyia</taxon>
    </lineage>
</organism>
<comment type="function">
    <text evidence="1">Serine/threonine-protein kinase that plays a central role in centriole duplication. Able to trigger procentriole formation on the surface of the mother centriole cylinder, leading to the recruitment of centriole biogenesis proteins. When overexpressed, it is able to induce centrosome amplification through the simultaneous generation of multiple procentrioles adjoining each parental centriole during S phase (By similarity).</text>
</comment>
<comment type="catalytic activity">
    <reaction>
        <text>L-seryl-[protein] + ATP = O-phospho-L-seryl-[protein] + ADP + H(+)</text>
        <dbReference type="Rhea" id="RHEA:17989"/>
        <dbReference type="Rhea" id="RHEA-COMP:9863"/>
        <dbReference type="Rhea" id="RHEA-COMP:11604"/>
        <dbReference type="ChEBI" id="CHEBI:15378"/>
        <dbReference type="ChEBI" id="CHEBI:29999"/>
        <dbReference type="ChEBI" id="CHEBI:30616"/>
        <dbReference type="ChEBI" id="CHEBI:83421"/>
        <dbReference type="ChEBI" id="CHEBI:456216"/>
        <dbReference type="EC" id="2.7.11.21"/>
    </reaction>
</comment>
<comment type="catalytic activity">
    <reaction>
        <text>L-threonyl-[protein] + ATP = O-phospho-L-threonyl-[protein] + ADP + H(+)</text>
        <dbReference type="Rhea" id="RHEA:46608"/>
        <dbReference type="Rhea" id="RHEA-COMP:11060"/>
        <dbReference type="Rhea" id="RHEA-COMP:11605"/>
        <dbReference type="ChEBI" id="CHEBI:15378"/>
        <dbReference type="ChEBI" id="CHEBI:30013"/>
        <dbReference type="ChEBI" id="CHEBI:30616"/>
        <dbReference type="ChEBI" id="CHEBI:61977"/>
        <dbReference type="ChEBI" id="CHEBI:456216"/>
        <dbReference type="EC" id="2.7.11.21"/>
    </reaction>
</comment>
<comment type="subunit">
    <text evidence="1">Homodimer.</text>
</comment>
<comment type="subcellular location">
    <subcellularLocation>
        <location evidence="1">Cytoplasm</location>
        <location evidence="1">Cytoskeleton</location>
        <location evidence="1">Microtubule organizing center</location>
        <location evidence="1">Centrosome</location>
        <location evidence="1">Centriole</location>
    </subcellularLocation>
</comment>
<comment type="PTM">
    <text evidence="1">Ubiquitinated; leading to its degradation by the proteasome.</text>
</comment>
<comment type="similarity">
    <text evidence="3 4 5">Belongs to the protein kinase superfamily. Ser/Thr protein kinase family. CDC5/Polo subfamily.</text>
</comment>
<sequence length="769" mass="85050">MSFGDRIEDYEVYEILGKGGFASVYRARCLGSGTFVAIKMIDKKLMQSSGMANRVRQEVSIHSQLKHPSILELYTFFEDASHVYLVLELAENGELQRYLRETKKTFNEYEAASVLKQVVDGLLYLHSHHILHRDMSLANLLLTKQMTVKISDFGLATQLTRPDEKHMTLCGTPNYISPEVASRASHGLPADVWGLGCMLYTFLVGKPPFDTEGVKSTLTKVVMSNYTIPPYISSEARDLIDQLLKKNPAERIKLDQVLQHPFMRKATSYDSYRGGGTLASSDSGLVTMSSNGGSNRSNIPSSYGQDQRLQAPIIHQMPLRYQPISEHEYDFQESILPQQRPQSASHNKPTSDFFSGISNDPRTMAPSSPTKSPKKRLDIPPLNTARLLPNRHKTKNAILSIRSSGEVVLEFIKFKTRYKENRVVDVCRISSDGLRFVLYHPDGGKGVPIEEEPPDLPPGGADSIFSYENLPEKHWKKYQYAARFVQMVKAKTPKITYYSEKAKCQLMETLEDYEASFYSGTKIIKSPQDGVKFVDSSGIAIKTIASLSSSQNAEYQHFQQTLEHCLNIERALSAIQTGKTFPLIIGRRPANAPLTSSSSSSSSSTKENQLYSNISSPNTPQTPHQMPSFAMSTASHTSAGNPLTQRPVLSSKPVPANFSNVAMKKCTIAGVGTAVQLSQGVVQVQFLDGATLSLIPIEQGGGVTFSPAVGSPLQHYSTQDNDALLPASLREKIGQMPAILRELNAAPVPSIPFNFLEGSPRTPLTRFLR</sequence>